<dbReference type="EMBL" id="AE001439">
    <property type="protein sequence ID" value="AAD06806.1"/>
    <property type="status" value="ALT_INIT"/>
    <property type="molecule type" value="Genomic_DNA"/>
</dbReference>
<dbReference type="RefSeq" id="WP_001860543.1">
    <property type="nucleotide sequence ID" value="NZ_CP011330.1"/>
</dbReference>
<dbReference type="SMR" id="P66573"/>
<dbReference type="GeneID" id="93237567"/>
<dbReference type="KEGG" id="hpj:jhp_1222"/>
<dbReference type="PATRIC" id="fig|85963.30.peg.1349"/>
<dbReference type="eggNOG" id="COG0098">
    <property type="taxonomic scope" value="Bacteria"/>
</dbReference>
<dbReference type="Proteomes" id="UP000000804">
    <property type="component" value="Chromosome"/>
</dbReference>
<dbReference type="GO" id="GO:0015935">
    <property type="term" value="C:small ribosomal subunit"/>
    <property type="evidence" value="ECO:0007669"/>
    <property type="project" value="InterPro"/>
</dbReference>
<dbReference type="GO" id="GO:0019843">
    <property type="term" value="F:rRNA binding"/>
    <property type="evidence" value="ECO:0007669"/>
    <property type="project" value="UniProtKB-UniRule"/>
</dbReference>
<dbReference type="GO" id="GO:0003735">
    <property type="term" value="F:structural constituent of ribosome"/>
    <property type="evidence" value="ECO:0007669"/>
    <property type="project" value="InterPro"/>
</dbReference>
<dbReference type="GO" id="GO:0006412">
    <property type="term" value="P:translation"/>
    <property type="evidence" value="ECO:0007669"/>
    <property type="project" value="UniProtKB-UniRule"/>
</dbReference>
<dbReference type="FunFam" id="3.30.160.20:FF:000001">
    <property type="entry name" value="30S ribosomal protein S5"/>
    <property type="match status" value="1"/>
</dbReference>
<dbReference type="FunFam" id="3.30.230.10:FF:000024">
    <property type="entry name" value="30S ribosomal protein S5"/>
    <property type="match status" value="1"/>
</dbReference>
<dbReference type="Gene3D" id="3.30.160.20">
    <property type="match status" value="1"/>
</dbReference>
<dbReference type="Gene3D" id="3.30.230.10">
    <property type="match status" value="1"/>
</dbReference>
<dbReference type="HAMAP" id="MF_01307_B">
    <property type="entry name" value="Ribosomal_uS5_B"/>
    <property type="match status" value="1"/>
</dbReference>
<dbReference type="InterPro" id="IPR020568">
    <property type="entry name" value="Ribosomal_Su5_D2-typ_SF"/>
</dbReference>
<dbReference type="InterPro" id="IPR000851">
    <property type="entry name" value="Ribosomal_uS5"/>
</dbReference>
<dbReference type="InterPro" id="IPR005712">
    <property type="entry name" value="Ribosomal_uS5_bac-type"/>
</dbReference>
<dbReference type="InterPro" id="IPR005324">
    <property type="entry name" value="Ribosomal_uS5_C"/>
</dbReference>
<dbReference type="InterPro" id="IPR013810">
    <property type="entry name" value="Ribosomal_uS5_N"/>
</dbReference>
<dbReference type="InterPro" id="IPR018192">
    <property type="entry name" value="Ribosomal_uS5_N_CS"/>
</dbReference>
<dbReference type="InterPro" id="IPR014721">
    <property type="entry name" value="Ribsml_uS5_D2-typ_fold_subgr"/>
</dbReference>
<dbReference type="NCBIfam" id="TIGR01021">
    <property type="entry name" value="rpsE_bact"/>
    <property type="match status" value="1"/>
</dbReference>
<dbReference type="PANTHER" id="PTHR48277">
    <property type="entry name" value="MITOCHONDRIAL RIBOSOMAL PROTEIN S5"/>
    <property type="match status" value="1"/>
</dbReference>
<dbReference type="PANTHER" id="PTHR48277:SF1">
    <property type="entry name" value="MITOCHONDRIAL RIBOSOMAL PROTEIN S5"/>
    <property type="match status" value="1"/>
</dbReference>
<dbReference type="Pfam" id="PF00333">
    <property type="entry name" value="Ribosomal_S5"/>
    <property type="match status" value="1"/>
</dbReference>
<dbReference type="Pfam" id="PF03719">
    <property type="entry name" value="Ribosomal_S5_C"/>
    <property type="match status" value="1"/>
</dbReference>
<dbReference type="SUPFAM" id="SSF54768">
    <property type="entry name" value="dsRNA-binding domain-like"/>
    <property type="match status" value="1"/>
</dbReference>
<dbReference type="SUPFAM" id="SSF54211">
    <property type="entry name" value="Ribosomal protein S5 domain 2-like"/>
    <property type="match status" value="1"/>
</dbReference>
<dbReference type="PROSITE" id="PS00585">
    <property type="entry name" value="RIBOSOMAL_S5"/>
    <property type="match status" value="1"/>
</dbReference>
<dbReference type="PROSITE" id="PS50881">
    <property type="entry name" value="S5_DSRBD"/>
    <property type="match status" value="1"/>
</dbReference>
<proteinExistence type="inferred from homology"/>
<feature type="chain" id="PRO_0000131526" description="Small ribosomal subunit protein uS5">
    <location>
        <begin position="1"/>
        <end position="147"/>
    </location>
</feature>
<feature type="domain" description="S5 DRBM" evidence="1">
    <location>
        <begin position="9"/>
        <end position="72"/>
    </location>
</feature>
<name>RS5_HELPJ</name>
<organism>
    <name type="scientific">Helicobacter pylori (strain J99 / ATCC 700824)</name>
    <name type="common">Campylobacter pylori J99</name>
    <dbReference type="NCBI Taxonomy" id="85963"/>
    <lineage>
        <taxon>Bacteria</taxon>
        <taxon>Pseudomonadati</taxon>
        <taxon>Campylobacterota</taxon>
        <taxon>Epsilonproteobacteria</taxon>
        <taxon>Campylobacterales</taxon>
        <taxon>Helicobacteraceae</taxon>
        <taxon>Helicobacter</taxon>
    </lineage>
</organism>
<keyword id="KW-0687">Ribonucleoprotein</keyword>
<keyword id="KW-0689">Ribosomal protein</keyword>
<keyword id="KW-0694">RNA-binding</keyword>
<keyword id="KW-0699">rRNA-binding</keyword>
<protein>
    <recommendedName>
        <fullName evidence="1">Small ribosomal subunit protein uS5</fullName>
    </recommendedName>
    <alternativeName>
        <fullName evidence="2">30S ribosomal protein S5</fullName>
    </alternativeName>
</protein>
<gene>
    <name evidence="1" type="primary">rpsE</name>
    <name type="ordered locus">jhp_1222</name>
</gene>
<accession>P66573</accession>
<accession>P56012</accession>
<comment type="function">
    <text evidence="1">With S4 and S12 plays an important role in translational accuracy.</text>
</comment>
<comment type="function">
    <text evidence="1">Located at the back of the 30S subunit body where it stabilizes the conformation of the head with respect to the body.</text>
</comment>
<comment type="subunit">
    <text evidence="1">Part of the 30S ribosomal subunit. Contacts proteins S4 and S8.</text>
</comment>
<comment type="domain">
    <text>The N-terminal domain interacts with the head of the 30S subunit; the C-terminal domain interacts with the body and contacts protein S4. The interaction surface between S4 and S5 is involved in control of translational fidelity.</text>
</comment>
<comment type="similarity">
    <text evidence="1">Belongs to the universal ribosomal protein uS5 family.</text>
</comment>
<comment type="sequence caution" evidence="2">
    <conflict type="erroneous initiation">
        <sequence resource="EMBL-CDS" id="AAD06806"/>
    </conflict>
</comment>
<evidence type="ECO:0000255" key="1">
    <source>
        <dbReference type="HAMAP-Rule" id="MF_01307"/>
    </source>
</evidence>
<evidence type="ECO:0000305" key="2"/>
<reference key="1">
    <citation type="journal article" date="1999" name="Nature">
        <title>Genomic sequence comparison of two unrelated isolates of the human gastric pathogen Helicobacter pylori.</title>
        <authorList>
            <person name="Alm R.A."/>
            <person name="Ling L.-S.L."/>
            <person name="Moir D.T."/>
            <person name="King B.L."/>
            <person name="Brown E.D."/>
            <person name="Doig P.C."/>
            <person name="Smith D.R."/>
            <person name="Noonan B."/>
            <person name="Guild B.C."/>
            <person name="deJonge B.L."/>
            <person name="Carmel G."/>
            <person name="Tummino P.J."/>
            <person name="Caruso A."/>
            <person name="Uria-Nickelsen M."/>
            <person name="Mills D.M."/>
            <person name="Ives C."/>
            <person name="Gibson R."/>
            <person name="Merberg D."/>
            <person name="Mills S.D."/>
            <person name="Jiang Q."/>
            <person name="Taylor D.E."/>
            <person name="Vovis G.F."/>
            <person name="Trust T.J."/>
        </authorList>
    </citation>
    <scope>NUCLEOTIDE SEQUENCE [LARGE SCALE GENOMIC DNA]</scope>
    <source>
        <strain>J99 / ATCC 700824</strain>
    </source>
</reference>
<sequence length="147" mass="15835">MEEINREEFQEVVVNIGRVTKVVKGGRRFRFNALVVVGNKNGLVGFGLGKAKEVPDAIKKAVDDAFKNLIHVTIKGTTIAHDIEHKYNASRILLKPASEGTGVIAGGSTRPIVELAGIKDILTKSLGSNNPYNVVRATFDALAKIKA</sequence>